<dbReference type="EMBL" id="X62475">
    <property type="protein sequence ID" value="CAA44339.1"/>
    <property type="molecule type" value="Genomic_DNA"/>
</dbReference>
<dbReference type="PIR" id="G39999">
    <property type="entry name" value="G39999"/>
</dbReference>
<dbReference type="PIR" id="S18148">
    <property type="entry name" value="S18148"/>
</dbReference>
<dbReference type="RefSeq" id="NP_052331.1">
    <property type="nucleotide sequence ID" value="NC_002117.1"/>
</dbReference>
<dbReference type="RefSeq" id="WP_006343674.1">
    <property type="nucleotide sequence ID" value="NC_002117.1"/>
</dbReference>
<dbReference type="SMR" id="Q46263"/>
<dbReference type="GeneID" id="12242270"/>
<dbReference type="OrthoDB" id="9815116at2"/>
<dbReference type="PRO" id="PR:Q46263"/>
<dbReference type="GO" id="GO:0005524">
    <property type="term" value="F:ATP binding"/>
    <property type="evidence" value="ECO:0007669"/>
    <property type="project" value="UniProtKB-KW"/>
</dbReference>
<dbReference type="CDD" id="cd02042">
    <property type="entry name" value="ParAB_family"/>
    <property type="match status" value="1"/>
</dbReference>
<dbReference type="Gene3D" id="3.40.50.300">
    <property type="entry name" value="P-loop containing nucleotide triphosphate hydrolases"/>
    <property type="match status" value="1"/>
</dbReference>
<dbReference type="InterPro" id="IPR025669">
    <property type="entry name" value="AAA_dom"/>
</dbReference>
<dbReference type="InterPro" id="IPR050678">
    <property type="entry name" value="DNA_Partitioning_ATPase"/>
</dbReference>
<dbReference type="InterPro" id="IPR027417">
    <property type="entry name" value="P-loop_NTPase"/>
</dbReference>
<dbReference type="PANTHER" id="PTHR13696">
    <property type="entry name" value="P-LOOP CONTAINING NUCLEOSIDE TRIPHOSPHATE HYDROLASE"/>
    <property type="match status" value="1"/>
</dbReference>
<dbReference type="PANTHER" id="PTHR13696:SF52">
    <property type="entry name" value="PARA FAMILY PROTEIN CT_582"/>
    <property type="match status" value="1"/>
</dbReference>
<dbReference type="Pfam" id="PF13614">
    <property type="entry name" value="AAA_31"/>
    <property type="match status" value="1"/>
</dbReference>
<dbReference type="SUPFAM" id="SSF52540">
    <property type="entry name" value="P-loop containing nucleoside triphosphate hydrolases"/>
    <property type="match status" value="1"/>
</dbReference>
<organism>
    <name type="scientific">Chlamydia psittaci</name>
    <name type="common">Chlamydophila psittaci</name>
    <dbReference type="NCBI Taxonomy" id="83554"/>
    <lineage>
        <taxon>Bacteria</taxon>
        <taxon>Pseudomonadati</taxon>
        <taxon>Chlamydiota</taxon>
        <taxon>Chlamydiia</taxon>
        <taxon>Chlamydiales</taxon>
        <taxon>Chlamydiaceae</taxon>
        <taxon>Chlamydia/Chlamydophila group</taxon>
        <taxon>Chlamydia</taxon>
    </lineage>
</organism>
<evidence type="ECO:0000255" key="1"/>
<evidence type="ECO:0000305" key="2"/>
<name>GP5D_CHLPS</name>
<sequence length="259" mass="28908">MKTLAFCSFKGGTGKTTLSLNIGSNLAQVSRKKVLLVDLDPQANLTTGLGVQIQDDHSLNEILRHSNEIRRAIHKTKIENLDIIPSSVLVEDFRGLDKDISLSVNHLHLALQKVQDQYDVCILDTPPSLGILSQEAFLASDYLVVCLTPEPFSILGLQKIKEFCSTIGNNLDILGIVFSFWDERNSTNSTYMDIIETIYEGKILSSKIRRDVTVSRSLLKESSVINAYPNSRAAKDILNLTKEIENKLFSDEKLVQETL</sequence>
<reference key="1">
    <citation type="journal article" date="1997" name="Microbiology">
        <title>Plasmid diversity in Chlamydia.</title>
        <authorList>
            <person name="Thomas N.S."/>
            <person name="Lusher M."/>
            <person name="Storey C.C."/>
            <person name="Clarke I.N."/>
        </authorList>
    </citation>
    <scope>NUCLEOTIDE SEQUENCE [GENOMIC DNA]</scope>
    <source>
        <strain>N352</strain>
    </source>
</reference>
<proteinExistence type="inferred from homology"/>
<keyword id="KW-0067">ATP-binding</keyword>
<keyword id="KW-0547">Nucleotide-binding</keyword>
<keyword id="KW-0614">Plasmid</keyword>
<accession>Q46263</accession>
<comment type="similarity">
    <text evidence="2">Belongs to the ParA family.</text>
</comment>
<geneLocation type="plasmid">
    <name>pCpA1</name>
</geneLocation>
<feature type="chain" id="PRO_0000201989" description="Virulence plasmid ParA family protein pGP5-D">
    <location>
        <begin position="1"/>
        <end position="259"/>
    </location>
</feature>
<feature type="binding site" evidence="1">
    <location>
        <begin position="9"/>
        <end position="16"/>
    </location>
    <ligand>
        <name>ATP</name>
        <dbReference type="ChEBI" id="CHEBI:30616"/>
    </ligand>
</feature>
<protein>
    <recommendedName>
        <fullName>Virulence plasmid ParA family protein pGP5-D</fullName>
    </recommendedName>
</protein>